<dbReference type="PIR" id="S01139">
    <property type="entry name" value="HBTJ2"/>
</dbReference>
<dbReference type="SMR" id="P10061"/>
<dbReference type="Proteomes" id="UP000694392">
    <property type="component" value="Unplaced"/>
</dbReference>
<dbReference type="GO" id="GO:0072562">
    <property type="term" value="C:blood microparticle"/>
    <property type="evidence" value="ECO:0007669"/>
    <property type="project" value="TreeGrafter"/>
</dbReference>
<dbReference type="GO" id="GO:0031838">
    <property type="term" value="C:haptoglobin-hemoglobin complex"/>
    <property type="evidence" value="ECO:0007669"/>
    <property type="project" value="TreeGrafter"/>
</dbReference>
<dbReference type="GO" id="GO:0005833">
    <property type="term" value="C:hemoglobin complex"/>
    <property type="evidence" value="ECO:0007669"/>
    <property type="project" value="InterPro"/>
</dbReference>
<dbReference type="GO" id="GO:0031720">
    <property type="term" value="F:haptoglobin binding"/>
    <property type="evidence" value="ECO:0007669"/>
    <property type="project" value="TreeGrafter"/>
</dbReference>
<dbReference type="GO" id="GO:0020037">
    <property type="term" value="F:heme binding"/>
    <property type="evidence" value="ECO:0007669"/>
    <property type="project" value="InterPro"/>
</dbReference>
<dbReference type="GO" id="GO:0046872">
    <property type="term" value="F:metal ion binding"/>
    <property type="evidence" value="ECO:0007669"/>
    <property type="project" value="UniProtKB-KW"/>
</dbReference>
<dbReference type="GO" id="GO:0043177">
    <property type="term" value="F:organic acid binding"/>
    <property type="evidence" value="ECO:0007669"/>
    <property type="project" value="TreeGrafter"/>
</dbReference>
<dbReference type="GO" id="GO:0019825">
    <property type="term" value="F:oxygen binding"/>
    <property type="evidence" value="ECO:0007669"/>
    <property type="project" value="InterPro"/>
</dbReference>
<dbReference type="GO" id="GO:0005344">
    <property type="term" value="F:oxygen carrier activity"/>
    <property type="evidence" value="ECO:0007669"/>
    <property type="project" value="UniProtKB-KW"/>
</dbReference>
<dbReference type="GO" id="GO:0004601">
    <property type="term" value="F:peroxidase activity"/>
    <property type="evidence" value="ECO:0007669"/>
    <property type="project" value="TreeGrafter"/>
</dbReference>
<dbReference type="GO" id="GO:0042744">
    <property type="term" value="P:hydrogen peroxide catabolic process"/>
    <property type="evidence" value="ECO:0007669"/>
    <property type="project" value="TreeGrafter"/>
</dbReference>
<dbReference type="CDD" id="cd08925">
    <property type="entry name" value="Hb-beta-like"/>
    <property type="match status" value="1"/>
</dbReference>
<dbReference type="FunFam" id="1.10.490.10:FF:000001">
    <property type="entry name" value="Hemoglobin subunit beta"/>
    <property type="match status" value="1"/>
</dbReference>
<dbReference type="Gene3D" id="1.10.490.10">
    <property type="entry name" value="Globins"/>
    <property type="match status" value="1"/>
</dbReference>
<dbReference type="InterPro" id="IPR000971">
    <property type="entry name" value="Globin"/>
</dbReference>
<dbReference type="InterPro" id="IPR009050">
    <property type="entry name" value="Globin-like_sf"/>
</dbReference>
<dbReference type="InterPro" id="IPR012292">
    <property type="entry name" value="Globin/Proto"/>
</dbReference>
<dbReference type="InterPro" id="IPR002337">
    <property type="entry name" value="Hemoglobin_b"/>
</dbReference>
<dbReference type="InterPro" id="IPR050056">
    <property type="entry name" value="Hemoglobin_oxygen_transport"/>
</dbReference>
<dbReference type="PANTHER" id="PTHR11442">
    <property type="entry name" value="HEMOGLOBIN FAMILY MEMBER"/>
    <property type="match status" value="1"/>
</dbReference>
<dbReference type="PANTHER" id="PTHR11442:SF7">
    <property type="entry name" value="HEMOGLOBIN SUBUNIT EPSILON"/>
    <property type="match status" value="1"/>
</dbReference>
<dbReference type="Pfam" id="PF00042">
    <property type="entry name" value="Globin"/>
    <property type="match status" value="1"/>
</dbReference>
<dbReference type="PRINTS" id="PR00814">
    <property type="entry name" value="BETAHAEM"/>
</dbReference>
<dbReference type="SUPFAM" id="SSF46458">
    <property type="entry name" value="Globin-like"/>
    <property type="match status" value="1"/>
</dbReference>
<dbReference type="PROSITE" id="PS01033">
    <property type="entry name" value="GLOBIN"/>
    <property type="match status" value="1"/>
</dbReference>
<organism>
    <name type="scientific">Sphenodon punctatus</name>
    <name type="common">Tuatara</name>
    <name type="synonym">Hatteria punctata</name>
    <dbReference type="NCBI Taxonomy" id="8508"/>
    <lineage>
        <taxon>Eukaryota</taxon>
        <taxon>Metazoa</taxon>
        <taxon>Chordata</taxon>
        <taxon>Craniata</taxon>
        <taxon>Vertebrata</taxon>
        <taxon>Euteleostomi</taxon>
        <taxon>Lepidosauria</taxon>
        <taxon>Sphenodontia</taxon>
        <taxon>Sphenodontidae</taxon>
        <taxon>Sphenodon</taxon>
    </lineage>
</organism>
<protein>
    <recommendedName>
        <fullName>Hemoglobin subunit beta-2</fullName>
    </recommendedName>
    <alternativeName>
        <fullName>Beta-2-globin</fullName>
    </alternativeName>
    <alternativeName>
        <fullName>Hemoglobin beta-2 chain</fullName>
    </alternativeName>
</protein>
<keyword id="KW-0903">Direct protein sequencing</keyword>
<keyword id="KW-0349">Heme</keyword>
<keyword id="KW-0408">Iron</keyword>
<keyword id="KW-0479">Metal-binding</keyword>
<keyword id="KW-0561">Oxygen transport</keyword>
<keyword id="KW-1185">Reference proteome</keyword>
<keyword id="KW-0813">Transport</keyword>
<proteinExistence type="evidence at protein level"/>
<comment type="function">
    <text>Involved in oxygen transport from the lung to the various peripheral tissues.</text>
</comment>
<comment type="subunit">
    <text>There are three forms of hemoglobin in Sphenodon: A, A' and D. Hb A is a tetramer of two alpha-A and two beta-1, Hb A' is a tetramer of two alpha-a and two beta-2, Hb D is a tetramer of two alpha-D and two beta-2.</text>
</comment>
<comment type="miscellaneous">
    <text>Sphenodon Hbs have properties not found in other reptiles: poor cooperativity, high affinity for oxygen, small Bohr and haldane effects, appreciable phosphate effects (those properties are also found in the Hbs of primitive urodele and caecilian amphibians).</text>
</comment>
<comment type="similarity">
    <text evidence="1">Belongs to the globin family.</text>
</comment>
<reference key="1">
    <citation type="journal article" date="1988" name="Biol. Chem. Hoppe-Seyler">
        <title>Primary structure of the hemoglobins from Sphenodon (Sphenodon punctatus, Tuatara, Rynchocephalia). Evidence for the expression of alpha D-gene.</title>
        <authorList>
            <person name="Abbasi A."/>
            <person name="Wells R.M.G."/>
            <person name="Brittain T."/>
            <person name="Braunitzer G."/>
        </authorList>
    </citation>
    <scope>PROTEIN SEQUENCE</scope>
</reference>
<gene>
    <name type="primary">HBB2</name>
</gene>
<feature type="chain" id="PRO_0000053114" description="Hemoglobin subunit beta-2">
    <location>
        <begin position="1"/>
        <end position="146"/>
    </location>
</feature>
<feature type="domain" description="Globin" evidence="1">
    <location>
        <begin position="2"/>
        <end position="146"/>
    </location>
</feature>
<feature type="binding site" description="distal binding residue">
    <location>
        <position position="63"/>
    </location>
    <ligand>
        <name>heme b</name>
        <dbReference type="ChEBI" id="CHEBI:60344"/>
    </ligand>
    <ligandPart>
        <name>Fe</name>
        <dbReference type="ChEBI" id="CHEBI:18248"/>
    </ligandPart>
</feature>
<feature type="binding site" description="proximal binding residue">
    <location>
        <position position="92"/>
    </location>
    <ligand>
        <name>heme b</name>
        <dbReference type="ChEBI" id="CHEBI:60344"/>
    </ligand>
    <ligandPart>
        <name>Fe</name>
        <dbReference type="ChEBI" id="CHEBI:18248"/>
    </ligandPart>
</feature>
<sequence length="146" mass="16342">VHWTAEEKQLVTSLWTKVNVDECGGEALGRLLIVYPWTQRFFSSFGNLSSSTAICGNPRVKAHGKKVFTSFGEAVKNLDNIKATYAKLSELHCEKLHVDPQNFNLLGDIFIIVLAAHFGKDFTPACQAAWQKLVRVVAHALAYHYH</sequence>
<accession>P10061</accession>
<name>HBB2_SPHPU</name>
<evidence type="ECO:0000255" key="1">
    <source>
        <dbReference type="PROSITE-ProRule" id="PRU00238"/>
    </source>
</evidence>